<accession>Q5R826</accession>
<dbReference type="EMBL" id="CR859929">
    <property type="protein sequence ID" value="CAH92084.1"/>
    <property type="molecule type" value="mRNA"/>
</dbReference>
<dbReference type="RefSeq" id="NP_001126216.1">
    <property type="nucleotide sequence ID" value="NM_001132744.1"/>
</dbReference>
<dbReference type="SMR" id="Q5R826"/>
<dbReference type="FunCoup" id="Q5R826">
    <property type="interactions" value="428"/>
</dbReference>
<dbReference type="STRING" id="9601.ENSPPYP00000024509"/>
<dbReference type="GeneID" id="100173184"/>
<dbReference type="KEGG" id="pon:100173184"/>
<dbReference type="CTD" id="9725"/>
<dbReference type="eggNOG" id="KOG1134">
    <property type="taxonomic scope" value="Eukaryota"/>
</dbReference>
<dbReference type="InParanoid" id="Q5R826"/>
<dbReference type="OrthoDB" id="1689567at2759"/>
<dbReference type="Proteomes" id="UP000001595">
    <property type="component" value="Unplaced"/>
</dbReference>
<dbReference type="GO" id="GO:0031901">
    <property type="term" value="C:early endosome membrane"/>
    <property type="evidence" value="ECO:0007669"/>
    <property type="project" value="UniProtKB-SubCell"/>
</dbReference>
<dbReference type="GO" id="GO:0005765">
    <property type="term" value="C:lysosomal membrane"/>
    <property type="evidence" value="ECO:0000250"/>
    <property type="project" value="UniProtKB"/>
</dbReference>
<dbReference type="GO" id="GO:0005886">
    <property type="term" value="C:plasma membrane"/>
    <property type="evidence" value="ECO:0000250"/>
    <property type="project" value="UniProtKB"/>
</dbReference>
<dbReference type="GO" id="GO:0005227">
    <property type="term" value="F:calcium-activated cation channel activity"/>
    <property type="evidence" value="ECO:0007669"/>
    <property type="project" value="InterPro"/>
</dbReference>
<dbReference type="GO" id="GO:0008381">
    <property type="term" value="F:mechanosensitive monoatomic ion channel activity"/>
    <property type="evidence" value="ECO:0000250"/>
    <property type="project" value="UniProtKB"/>
</dbReference>
<dbReference type="GO" id="GO:0003676">
    <property type="term" value="F:nucleic acid binding"/>
    <property type="evidence" value="ECO:0007669"/>
    <property type="project" value="InterPro"/>
</dbReference>
<dbReference type="GO" id="GO:1990760">
    <property type="term" value="F:osmolarity-sensing monoatomic cation channel activity"/>
    <property type="evidence" value="ECO:0000250"/>
    <property type="project" value="UniProtKB"/>
</dbReference>
<dbReference type="GO" id="GO:0007040">
    <property type="term" value="P:lysosome organization"/>
    <property type="evidence" value="ECO:0000250"/>
    <property type="project" value="UniProtKB"/>
</dbReference>
<dbReference type="GO" id="GO:0160069">
    <property type="term" value="P:surfactant secretion"/>
    <property type="evidence" value="ECO:0000250"/>
    <property type="project" value="UniProtKB"/>
</dbReference>
<dbReference type="Gene3D" id="3.30.70.330">
    <property type="match status" value="1"/>
</dbReference>
<dbReference type="InterPro" id="IPR045122">
    <property type="entry name" value="Csc1-like"/>
</dbReference>
<dbReference type="InterPro" id="IPR003864">
    <property type="entry name" value="CSC1/OSCA1-like_7TM"/>
</dbReference>
<dbReference type="InterPro" id="IPR027815">
    <property type="entry name" value="CSC1/OSCA1-like_cyt"/>
</dbReference>
<dbReference type="InterPro" id="IPR032880">
    <property type="entry name" value="Csc1/OSCA1-like_N"/>
</dbReference>
<dbReference type="InterPro" id="IPR012677">
    <property type="entry name" value="Nucleotide-bd_a/b_plait_sf"/>
</dbReference>
<dbReference type="InterPro" id="IPR035979">
    <property type="entry name" value="RBD_domain_sf"/>
</dbReference>
<dbReference type="PANTHER" id="PTHR13018:SF24">
    <property type="entry name" value="CSC1-LIKE PROTEIN 1"/>
    <property type="match status" value="1"/>
</dbReference>
<dbReference type="PANTHER" id="PTHR13018">
    <property type="entry name" value="PROBABLE MEMBRANE PROTEIN DUF221-RELATED"/>
    <property type="match status" value="1"/>
</dbReference>
<dbReference type="Pfam" id="PF14703">
    <property type="entry name" value="PHM7_cyt"/>
    <property type="match status" value="1"/>
</dbReference>
<dbReference type="Pfam" id="PF02714">
    <property type="entry name" value="RSN1_7TM"/>
    <property type="match status" value="1"/>
</dbReference>
<dbReference type="Pfam" id="PF13967">
    <property type="entry name" value="RSN1_TM"/>
    <property type="match status" value="1"/>
</dbReference>
<dbReference type="SUPFAM" id="SSF54928">
    <property type="entry name" value="RNA-binding domain, RBD"/>
    <property type="match status" value="1"/>
</dbReference>
<evidence type="ECO:0000250" key="1">
    <source>
        <dbReference type="UniProtKB" id="O94886"/>
    </source>
</evidence>
<evidence type="ECO:0000250" key="2">
    <source>
        <dbReference type="UniProtKB" id="Q91YT8"/>
    </source>
</evidence>
<evidence type="ECO:0000255" key="3"/>
<evidence type="ECO:0000255" key="4">
    <source>
        <dbReference type="PROSITE-ProRule" id="PRU00498"/>
    </source>
</evidence>
<evidence type="ECO:0000305" key="5"/>
<keyword id="KW-0106">Calcium</keyword>
<keyword id="KW-1003">Cell membrane</keyword>
<keyword id="KW-0967">Endosome</keyword>
<keyword id="KW-0325">Glycoprotein</keyword>
<keyword id="KW-0407">Ion channel</keyword>
<keyword id="KW-0406">Ion transport</keyword>
<keyword id="KW-0458">Lysosome</keyword>
<keyword id="KW-0472">Membrane</keyword>
<keyword id="KW-0597">Phosphoprotein</keyword>
<keyword id="KW-1185">Reference proteome</keyword>
<keyword id="KW-0812">Transmembrane</keyword>
<keyword id="KW-1133">Transmembrane helix</keyword>
<keyword id="KW-0813">Transport</keyword>
<reference key="1">
    <citation type="submission" date="2004-11" db="EMBL/GenBank/DDBJ databases">
        <authorList>
            <consortium name="The German cDNA consortium"/>
        </authorList>
    </citation>
    <scope>NUCLEOTIDE SEQUENCE [LARGE SCALE MRNA]</scope>
    <source>
        <tissue>Kidney</tissue>
    </source>
</reference>
<organism>
    <name type="scientific">Pongo abelii</name>
    <name type="common">Sumatran orangutan</name>
    <name type="synonym">Pongo pygmaeus abelii</name>
    <dbReference type="NCBI Taxonomy" id="9601"/>
    <lineage>
        <taxon>Eukaryota</taxon>
        <taxon>Metazoa</taxon>
        <taxon>Chordata</taxon>
        <taxon>Craniata</taxon>
        <taxon>Vertebrata</taxon>
        <taxon>Euteleostomi</taxon>
        <taxon>Mammalia</taxon>
        <taxon>Eutheria</taxon>
        <taxon>Euarchontoglires</taxon>
        <taxon>Primates</taxon>
        <taxon>Haplorrhini</taxon>
        <taxon>Catarrhini</taxon>
        <taxon>Hominidae</taxon>
        <taxon>Pongo</taxon>
    </lineage>
</organism>
<feature type="chain" id="PRO_0000280727" description="Mechanosensitive cation channel TMEM63A">
    <location>
        <begin position="1"/>
        <end position="807"/>
    </location>
</feature>
<feature type="topological domain" description="Extracellular" evidence="1">
    <location>
        <begin position="1"/>
        <end position="51"/>
    </location>
</feature>
<feature type="transmembrane region" description="Helical; Name=TM0" evidence="1">
    <location>
        <begin position="52"/>
        <end position="74"/>
    </location>
</feature>
<feature type="topological domain" description="Cytoplasmic" evidence="1">
    <location>
        <begin position="75"/>
        <end position="134"/>
    </location>
</feature>
<feature type="transmembrane region" description="Helical; Name=TM1" evidence="1">
    <location>
        <begin position="135"/>
        <end position="167"/>
    </location>
</feature>
<feature type="topological domain" description="Extracellular" evidence="1">
    <location>
        <begin position="168"/>
        <end position="191"/>
    </location>
</feature>
<feature type="transmembrane region" description="Helical; Name=TM2" evidence="1">
    <location>
        <begin position="192"/>
        <end position="217"/>
    </location>
</feature>
<feature type="topological domain" description="Cytoplasmic" evidence="1">
    <location>
        <begin position="218"/>
        <end position="416"/>
    </location>
</feature>
<feature type="transmembrane region" description="Helical; Name=TM3" evidence="1">
    <location>
        <begin position="417"/>
        <end position="444"/>
    </location>
</feature>
<feature type="topological domain" description="Extracellular" evidence="1">
    <location>
        <begin position="445"/>
        <end position="462"/>
    </location>
</feature>
<feature type="transmembrane region" description="Helical; Name=TM4" evidence="1">
    <location>
        <begin position="463"/>
        <end position="490"/>
    </location>
</feature>
<feature type="topological domain" description="Cytoplasmic" evidence="1">
    <location>
        <begin position="491"/>
        <end position="495"/>
    </location>
</feature>
<feature type="transmembrane region" description="Helical; Name=TM5" evidence="1">
    <location>
        <begin position="496"/>
        <end position="532"/>
    </location>
</feature>
<feature type="topological domain" description="Extracellular" evidence="1">
    <location>
        <begin position="533"/>
        <end position="554"/>
    </location>
</feature>
<feature type="transmembrane region" description="Helical; Name=TM6" evidence="1">
    <location>
        <begin position="555"/>
        <end position="586"/>
    </location>
</feature>
<feature type="topological domain" description="Cytoplasmic" evidence="1">
    <location>
        <begin position="587"/>
        <end position="606"/>
    </location>
</feature>
<feature type="transmembrane region" description="Helical; Name=TM7" evidence="1">
    <location>
        <begin position="607"/>
        <end position="624"/>
    </location>
</feature>
<feature type="topological domain" description="Extracellular" evidence="1">
    <location>
        <begin position="625"/>
        <end position="628"/>
    </location>
</feature>
<feature type="transmembrane region" description="Helical; Name=TM8" evidence="1">
    <location>
        <begin position="629"/>
        <end position="651"/>
    </location>
</feature>
<feature type="topological domain" description="Cytoplasmic" evidence="1">
    <location>
        <begin position="652"/>
        <end position="661"/>
    </location>
</feature>
<feature type="transmembrane region" description="Helical; Name=TM9" evidence="1">
    <location>
        <begin position="662"/>
        <end position="689"/>
    </location>
</feature>
<feature type="topological domain" description="Extracellular" evidence="1">
    <location>
        <begin position="690"/>
        <end position="694"/>
    </location>
</feature>
<feature type="transmembrane region" description="Helical; Name=TM10" evidence="1">
    <location>
        <begin position="695"/>
        <end position="709"/>
    </location>
</feature>
<feature type="topological domain" description="Cytoplasmic" evidence="1">
    <location>
        <begin position="710"/>
        <end position="807"/>
    </location>
</feature>
<feature type="region of interest" description="Intracellular linker IL2; confers mechanosensitivity" evidence="1">
    <location>
        <begin position="219"/>
        <end position="414"/>
    </location>
</feature>
<feature type="region of interest" description="Gating helix" evidence="1">
    <location>
        <begin position="555"/>
        <end position="586"/>
    </location>
</feature>
<feature type="modified residue" description="Phosphoserine" evidence="2">
    <location>
        <position position="739"/>
    </location>
</feature>
<feature type="glycosylation site" description="N-linked (GlcNAc...) asparagine" evidence="4">
    <location>
        <position position="38"/>
    </location>
</feature>
<feature type="glycosylation site" description="N-linked (GlcNAc...) asparagine" evidence="4">
    <location>
        <position position="450"/>
    </location>
</feature>
<name>TM63A_PONAB</name>
<protein>
    <recommendedName>
        <fullName evidence="5">Mechanosensitive cation channel TMEM63A</fullName>
    </recommendedName>
    <alternativeName>
        <fullName>Transmembrane protein 63A</fullName>
    </alternativeName>
</protein>
<proteinExistence type="evidence at transcript level"/>
<comment type="function">
    <text evidence="1 2">Mechanosensitive cation channel with low conductance and high activation threshold. In contrast to TMEM63B, does not show phospholipid scramblase activity (By similarity). Acts as a regulator of lysosomal morphology by mediating lysosomal mechanosensitivity (By similarity). Important for the baby's first breath and respiration throughout life. Upon lung inflation conducts cation currents in alveolar type 1 and 2 cells triggering lamellar body exocytosis and surfactant secretion into airspace (By similarity). Also acts as an osmosensitive cation channel preferentially activated by hypotonic stress (By similarity).</text>
</comment>
<comment type="catalytic activity">
    <reaction evidence="2">
        <text>Ca(2+)(in) = Ca(2+)(out)</text>
        <dbReference type="Rhea" id="RHEA:29671"/>
        <dbReference type="ChEBI" id="CHEBI:29108"/>
    </reaction>
</comment>
<comment type="subunit">
    <text evidence="1">Monomer.</text>
</comment>
<comment type="subcellular location">
    <subcellularLocation>
        <location evidence="1">Lysosome membrane</location>
        <topology evidence="3">Multi-pass membrane protein</topology>
    </subcellularLocation>
    <subcellularLocation>
        <location evidence="1">Early endosome membrane</location>
        <topology evidence="3">Multi-pass membrane protein</topology>
    </subcellularLocation>
    <subcellularLocation>
        <location evidence="1">Cell membrane</location>
        <topology evidence="3">Multi-pass membrane protein</topology>
    </subcellularLocation>
</comment>
<comment type="PTM">
    <text evidence="1">N-Glycosylated.</text>
</comment>
<comment type="similarity">
    <text evidence="5">Belongs to the CSC1 (TC 1.A.17) family.</text>
</comment>
<sequence>MTDSPFLELWQSRAVSVREQLGLGDRPNDSYCYNSAKNSTVLQGVTFGGIPTVLLIDVSCFLFLILVFSIIRRRFWDYGRIALVSEADSEPRFQRLSSTSSSGQQDFENELGCCPWLTAIFRLHDDQILEWCGEDAIHYLSFQRHIIFLLVVVSFLSLCVILPVNLSGDLLDKDPYSFGRTTIANLQTDNDLLWLHTIFAVIYLFLTVGFMRHHTQSIKYKEENLVRRTLFITGLPRDARKETVESHFRDAYPTCEVVDVQLCYNVAKLIYLCKERKKTEKSLTYYTNLQVKTGQRTLINPKPCGQFCCCEVQGCEWEDAISYYTRMKDRLLERITEEERHVQDQPLGMAFVTFQEKSMATYILKDFNACKCQSLQCKGEPQPSSHSRELYTSKWTVTFAADPEDICWKNLSIQGLRWWLQWLGINFTLFLGLFFLTTPSIILSTMDKFNVTKPIHALNNPIISQFFPTLLLWSFSALLPSIVYYSTLLESHWTKSGENQIMMTKVYIFLIFMVLILPSLGLTSLDFFFRWLFDKTSSEASIRLECVFLPDQGAFFVNYVIASAFIGNGMELLRLPGLILYTFRMIMAKTAADRRNVKQNQAFQYEFGAMYAWMLCVFTVIMAYSITCPIIAPFGLIYILLKHMVDRHNLYFIYLPAKLEKGIHFAAVNQALAAPILCLFWLYFFSFLRLGMKAPATLFTFLVVLLTILVCLAHTCFGYFKHLSPLNYKTEEPASDKGSEAEAHMPPPFTPYVPRILNGLASERTALSPQQQQQQTYGAIHNISGTIPGQCLAQSATGSVAAAPQEA</sequence>
<gene>
    <name type="primary">TMEM63A</name>
</gene>